<keyword id="KW-0028">Amino-acid biosynthesis</keyword>
<keyword id="KW-0055">Arginine biosynthesis</keyword>
<keyword id="KW-0067">ATP-binding</keyword>
<keyword id="KW-0436">Ligase</keyword>
<keyword id="KW-0460">Magnesium</keyword>
<keyword id="KW-0464">Manganese</keyword>
<keyword id="KW-0479">Metal-binding</keyword>
<keyword id="KW-0547">Nucleotide-binding</keyword>
<keyword id="KW-0665">Pyrimidine biosynthesis</keyword>
<keyword id="KW-1185">Reference proteome</keyword>
<keyword id="KW-0677">Repeat</keyword>
<organism>
    <name type="scientific">Methanocaldococcus jannaschii (strain ATCC 43067 / DSM 2661 / JAL-1 / JCM 10045 / NBRC 100440)</name>
    <name type="common">Methanococcus jannaschii</name>
    <dbReference type="NCBI Taxonomy" id="243232"/>
    <lineage>
        <taxon>Archaea</taxon>
        <taxon>Methanobacteriati</taxon>
        <taxon>Methanobacteriota</taxon>
        <taxon>Methanomada group</taxon>
        <taxon>Methanococci</taxon>
        <taxon>Methanococcales</taxon>
        <taxon>Methanocaldococcaceae</taxon>
        <taxon>Methanocaldococcus</taxon>
    </lineage>
</organism>
<sequence length="618" mass="68453">MDMEKLKEILLKAKKLGFSDKQIANLLGMDEIEVRDLRKKLNIIPLYKMVDTCAAEFEAKTPYYYSAYETFVYKEQDESNPSDRKKVIIIGSGPIRIGQGIEFDYSSVHAVLALKEMGIEAIIINNNPETVSTDYDTSDKLYFEPITFEEVLNIAEREKEKGELLGVIVQFGGQTAINLAMKLKNAGVNILGTTPENINAAEDREEFSKLLKKLNIPQAEGGTAYTKEEALEIAKRIGYPVLVRPSYVLGGRAMQIVYSEDELIEYMEEAVKVSEEHPVLIDKFLEDAIELDVDAVCDGESVLIGAIMEHIEEAGVHSGDSATVIPPQTLPKEIIDTVIDYTAKLARALNIVGLLNVQYAVKDGVVYVLEANPRASRTVPYVSKSVGIPLAKLATKIMLGKKLEELIKDYDVEKVAEKVWIAKPKYVSIKEAVFPFQKLPGVDPVLGPEMKSTGEAIGIDKDFGRAYYKAQLSANMELPIVGNVFISVRDRDKKHIVDVAKKLHELGFTIYATEGTAKVLRENGIPAILVKKISESPNDNILKLMRDGKMHLIINTSSGKKAKSDGYYIRRAAVDLGIPYITTIPGAKAAVKAIEAVKTGELSVYSLDELDARIKNRF</sequence>
<protein>
    <recommendedName>
        <fullName evidence="3">Carbamoyl phosphate synthase large chain, C-terminal section</fullName>
        <ecNumber evidence="1">6.3.4.16</ecNumber>
        <ecNumber evidence="1">6.3.5.5</ecNumber>
    </recommendedName>
    <alternativeName>
        <fullName>Carbamoyl phosphate synthetase ammonia chain</fullName>
    </alternativeName>
</protein>
<gene>
    <name type="primary">carB2</name>
    <name type="ordered locus">MJ1381</name>
</gene>
<name>CARB2_METJA</name>
<comment type="function">
    <text evidence="1">Large subunit of the glutamine-dependent carbamoyl phosphate synthetase (CPSase). CPSase catalyzes the formation of carbamoyl phosphate from the ammonia moiety of glutamine, carbonate, and phosphate donated by ATP, constituting the first step of 2 biosynthetic pathways, one leading to arginine and/or urea and the other to pyrimidine nucleotides. The large subunit (synthetase) binds the substrates ammonia (free or transferred from glutamine from the small subunit), hydrogencarbonate and ATP and carries out an ATP-coupled ligase reaction, activating hydrogencarbonate by forming carboxy phosphate which reacts with ammonia to form carbamoyl phosphate.</text>
</comment>
<comment type="catalytic activity">
    <reaction evidence="1">
        <text>hydrogencarbonate + L-glutamine + 2 ATP + H2O = carbamoyl phosphate + L-glutamate + 2 ADP + phosphate + 2 H(+)</text>
        <dbReference type="Rhea" id="RHEA:18633"/>
        <dbReference type="ChEBI" id="CHEBI:15377"/>
        <dbReference type="ChEBI" id="CHEBI:15378"/>
        <dbReference type="ChEBI" id="CHEBI:17544"/>
        <dbReference type="ChEBI" id="CHEBI:29985"/>
        <dbReference type="ChEBI" id="CHEBI:30616"/>
        <dbReference type="ChEBI" id="CHEBI:43474"/>
        <dbReference type="ChEBI" id="CHEBI:58228"/>
        <dbReference type="ChEBI" id="CHEBI:58359"/>
        <dbReference type="ChEBI" id="CHEBI:456216"/>
        <dbReference type="EC" id="6.3.5.5"/>
    </reaction>
</comment>
<comment type="catalytic activity">
    <reaction evidence="1">
        <text>hydrogencarbonate + NH4(+) + 2 ATP = carbamoyl phosphate + 2 ADP + phosphate + 2 H(+)</text>
        <dbReference type="Rhea" id="RHEA:18029"/>
        <dbReference type="ChEBI" id="CHEBI:15378"/>
        <dbReference type="ChEBI" id="CHEBI:17544"/>
        <dbReference type="ChEBI" id="CHEBI:28938"/>
        <dbReference type="ChEBI" id="CHEBI:30616"/>
        <dbReference type="ChEBI" id="CHEBI:43474"/>
        <dbReference type="ChEBI" id="CHEBI:58228"/>
        <dbReference type="ChEBI" id="CHEBI:456216"/>
        <dbReference type="EC" id="6.3.4.16"/>
    </reaction>
</comment>
<comment type="cofactor">
    <cofactor evidence="1">
        <name>Mg(2+)</name>
        <dbReference type="ChEBI" id="CHEBI:18420"/>
    </cofactor>
    <cofactor evidence="1">
        <name>Mn(2+)</name>
        <dbReference type="ChEBI" id="CHEBI:29035"/>
    </cofactor>
    <text evidence="3">Binds 2 Mg(2+) or Mn(2+) ions per subunit.</text>
</comment>
<comment type="pathway">
    <text evidence="1">Amino-acid biosynthesis; L-arginine biosynthesis; carbamoyl phosphate from bicarbonate: step 1/1.</text>
</comment>
<comment type="pathway">
    <text evidence="1">Pyrimidine metabolism; UMP biosynthesis via de novo pathway; (S)-dihydroorotate from bicarbonate: step 1/3.</text>
</comment>
<comment type="subunit">
    <text evidence="1">Composed of two chains; the small (or glutamine) chain promotes the hydrolysis of glutamine to ammonia, which is used by the large (or ammonia) chain to synthesize carbamoyl phosphate. Tetramer of heterodimers (alpha,beta)4.</text>
</comment>
<comment type="domain">
    <text evidence="3">Corresponds to the C-terminal section.</text>
</comment>
<comment type="domain">
    <text evidence="1">The large subunit is composed of 2 ATP-grasp domains that are involved in binding the 2 ATP molecules needed for carbamoyl phosphate synthesis. The N-terminal ATP-grasp domain (referred to as the carboxyphosphate synthetic component) catalyzes the ATP-dependent phosphorylation of hydrogencarbonate to carboxyphosphate and the subsequent nucleophilic attack by ammonia to form a carbamate intermediate. The C-terminal ATP-grasp domain (referred to as the carbamoyl phosphate synthetic component) then catalyzes the phosphorylation of carbamate with the second ATP to form the end product carbamoyl phosphate. The reactive and unstable enzyme intermediates are sequentially channeled from one active site to the next through the interior of the protein over a distance of at least 96 A.</text>
</comment>
<comment type="similarity">
    <text evidence="3">Belongs to the CarB family.</text>
</comment>
<comment type="caution">
    <text evidence="3">CarB is split into two genes in M.jannaschii (MJ1378 and MJ1381).</text>
</comment>
<feature type="chain" id="PRO_0000145076" description="Carbamoyl phosphate synthase large chain, C-terminal section">
    <location>
        <begin position="1"/>
        <end position="618"/>
    </location>
</feature>
<feature type="domain" description="ATP-grasp" evidence="1">
    <location>
        <begin position="208"/>
        <end position="399"/>
    </location>
</feature>
<feature type="domain" description="MGS-like" evidence="1">
    <location>
        <begin position="476"/>
        <end position="618"/>
    </location>
</feature>
<feature type="region of interest" description="Oligomerization domain" evidence="1">
    <location>
        <begin position="1"/>
        <end position="78"/>
    </location>
</feature>
<feature type="region of interest" description="Carbamoyl phosphate synthetic domain" evidence="1">
    <location>
        <begin position="79"/>
        <end position="477"/>
    </location>
</feature>
<feature type="region of interest" description="Allosteric domain" evidence="1">
    <location>
        <begin position="478"/>
        <end position="618"/>
    </location>
</feature>
<feature type="binding site" evidence="1">
    <location>
        <position position="244"/>
    </location>
    <ligand>
        <name>ATP</name>
        <dbReference type="ChEBI" id="CHEBI:30616"/>
        <label>2</label>
    </ligand>
</feature>
<feature type="binding site" evidence="1">
    <location>
        <position position="283"/>
    </location>
    <ligand>
        <name>ATP</name>
        <dbReference type="ChEBI" id="CHEBI:30616"/>
        <label>2</label>
    </ligand>
</feature>
<feature type="binding site" evidence="1">
    <location>
        <position position="285"/>
    </location>
    <ligand>
        <name>ATP</name>
        <dbReference type="ChEBI" id="CHEBI:30616"/>
        <label>2</label>
    </ligand>
</feature>
<feature type="binding site" evidence="1">
    <location>
        <position position="290"/>
    </location>
    <ligand>
        <name>ATP</name>
        <dbReference type="ChEBI" id="CHEBI:30616"/>
        <label>2</label>
    </ligand>
</feature>
<feature type="binding site" evidence="1">
    <location>
        <position position="315"/>
    </location>
    <ligand>
        <name>ATP</name>
        <dbReference type="ChEBI" id="CHEBI:30616"/>
        <label>2</label>
    </ligand>
</feature>
<feature type="binding site" evidence="1">
    <location>
        <position position="316"/>
    </location>
    <ligand>
        <name>ATP</name>
        <dbReference type="ChEBI" id="CHEBI:30616"/>
        <label>2</label>
    </ligand>
</feature>
<feature type="binding site" evidence="1">
    <location>
        <position position="317"/>
    </location>
    <ligand>
        <name>ATP</name>
        <dbReference type="ChEBI" id="CHEBI:30616"/>
        <label>2</label>
    </ligand>
</feature>
<feature type="binding site" evidence="1">
    <location>
        <position position="318"/>
    </location>
    <ligand>
        <name>ATP</name>
        <dbReference type="ChEBI" id="CHEBI:30616"/>
        <label>2</label>
    </ligand>
</feature>
<feature type="binding site" evidence="1">
    <location>
        <position position="358"/>
    </location>
    <ligand>
        <name>ATP</name>
        <dbReference type="ChEBI" id="CHEBI:30616"/>
        <label>2</label>
    </ligand>
</feature>
<feature type="binding site" evidence="2">
    <location>
        <position position="358"/>
    </location>
    <ligand>
        <name>Mg(2+)</name>
        <dbReference type="ChEBI" id="CHEBI:18420"/>
        <label>1</label>
    </ligand>
</feature>
<feature type="binding site" evidence="2">
    <location>
        <position position="358"/>
    </location>
    <ligand>
        <name>Mn(2+)</name>
        <dbReference type="ChEBI" id="CHEBI:29035"/>
        <label>1</label>
    </ligand>
</feature>
<feature type="binding site" evidence="1">
    <location>
        <position position="370"/>
    </location>
    <ligand>
        <name>ATP</name>
        <dbReference type="ChEBI" id="CHEBI:30616"/>
        <label>2</label>
    </ligand>
</feature>
<feature type="binding site" evidence="2">
    <location>
        <position position="370"/>
    </location>
    <ligand>
        <name>Mg(2+)</name>
        <dbReference type="ChEBI" id="CHEBI:18420"/>
        <label>1</label>
    </ligand>
</feature>
<feature type="binding site" evidence="2">
    <location>
        <position position="370"/>
    </location>
    <ligand>
        <name>Mg(2+)</name>
        <dbReference type="ChEBI" id="CHEBI:18420"/>
        <label>2</label>
    </ligand>
</feature>
<feature type="binding site" evidence="2">
    <location>
        <position position="370"/>
    </location>
    <ligand>
        <name>Mn(2+)</name>
        <dbReference type="ChEBI" id="CHEBI:29035"/>
        <label>1</label>
    </ligand>
</feature>
<feature type="binding site" evidence="2">
    <location>
        <position position="370"/>
    </location>
    <ligand>
        <name>Mn(2+)</name>
        <dbReference type="ChEBI" id="CHEBI:29035"/>
        <label>2</label>
    </ligand>
</feature>
<feature type="binding site" evidence="2">
    <location>
        <position position="372"/>
    </location>
    <ligand>
        <name>Mg(2+)</name>
        <dbReference type="ChEBI" id="CHEBI:18420"/>
        <label>2</label>
    </ligand>
</feature>
<feature type="binding site" evidence="2">
    <location>
        <position position="372"/>
    </location>
    <ligand>
        <name>Mn(2+)</name>
        <dbReference type="ChEBI" id="CHEBI:29035"/>
        <label>2</label>
    </ligand>
</feature>
<accession>Q58776</accession>
<evidence type="ECO:0000250" key="1">
    <source>
        <dbReference type="UniProtKB" id="P00968"/>
    </source>
</evidence>
<evidence type="ECO:0000255" key="2">
    <source>
        <dbReference type="PROSITE-ProRule" id="PRU00409"/>
    </source>
</evidence>
<evidence type="ECO:0000305" key="3"/>
<proteinExistence type="inferred from homology"/>
<dbReference type="EC" id="6.3.4.16" evidence="1"/>
<dbReference type="EC" id="6.3.5.5" evidence="1"/>
<dbReference type="EMBL" id="L77117">
    <property type="protein sequence ID" value="AAB99391.1"/>
    <property type="molecule type" value="Genomic_DNA"/>
</dbReference>
<dbReference type="PIR" id="D64472">
    <property type="entry name" value="D64472"/>
</dbReference>
<dbReference type="RefSeq" id="WP_010870898.1">
    <property type="nucleotide sequence ID" value="NC_000909.1"/>
</dbReference>
<dbReference type="SMR" id="Q58776"/>
<dbReference type="FunCoup" id="Q58776">
    <property type="interactions" value="228"/>
</dbReference>
<dbReference type="STRING" id="243232.MJ_1381"/>
<dbReference type="PaxDb" id="243232-MJ_1381"/>
<dbReference type="EnsemblBacteria" id="AAB99391">
    <property type="protein sequence ID" value="AAB99391"/>
    <property type="gene ID" value="MJ_1381"/>
</dbReference>
<dbReference type="GeneID" id="1452284"/>
<dbReference type="KEGG" id="mja:MJ_1381"/>
<dbReference type="eggNOG" id="arCOG01594">
    <property type="taxonomic scope" value="Archaea"/>
</dbReference>
<dbReference type="HOGENOM" id="CLU_000513_3_4_2"/>
<dbReference type="InParanoid" id="Q58776"/>
<dbReference type="OrthoDB" id="85487at2157"/>
<dbReference type="PhylomeDB" id="Q58776"/>
<dbReference type="UniPathway" id="UPA00068">
    <property type="reaction ID" value="UER00171"/>
</dbReference>
<dbReference type="UniPathway" id="UPA00070">
    <property type="reaction ID" value="UER00115"/>
</dbReference>
<dbReference type="Proteomes" id="UP000000805">
    <property type="component" value="Chromosome"/>
</dbReference>
<dbReference type="GO" id="GO:0005524">
    <property type="term" value="F:ATP binding"/>
    <property type="evidence" value="ECO:0007669"/>
    <property type="project" value="UniProtKB-KW"/>
</dbReference>
<dbReference type="GO" id="GO:0004087">
    <property type="term" value="F:carbamoyl-phosphate synthase (ammonia) activity"/>
    <property type="evidence" value="ECO:0007669"/>
    <property type="project" value="RHEA"/>
</dbReference>
<dbReference type="GO" id="GO:0004088">
    <property type="term" value="F:carbamoyl-phosphate synthase (glutamine-hydrolyzing) activity"/>
    <property type="evidence" value="ECO:0007669"/>
    <property type="project" value="UniProtKB-EC"/>
</dbReference>
<dbReference type="GO" id="GO:0046872">
    <property type="term" value="F:metal ion binding"/>
    <property type="evidence" value="ECO:0007669"/>
    <property type="project" value="UniProtKB-KW"/>
</dbReference>
<dbReference type="GO" id="GO:0044205">
    <property type="term" value="P:'de novo' UMP biosynthetic process"/>
    <property type="evidence" value="ECO:0007669"/>
    <property type="project" value="UniProtKB-UniPathway"/>
</dbReference>
<dbReference type="GO" id="GO:0006526">
    <property type="term" value="P:L-arginine biosynthetic process"/>
    <property type="evidence" value="ECO:0007669"/>
    <property type="project" value="UniProtKB-UniPathway"/>
</dbReference>
<dbReference type="CDD" id="cd01424">
    <property type="entry name" value="MGS_CPS_II"/>
    <property type="match status" value="1"/>
</dbReference>
<dbReference type="FunFam" id="3.30.1490.20:FF:000001">
    <property type="entry name" value="Carbamoyl-phosphate synthase large chain"/>
    <property type="match status" value="1"/>
</dbReference>
<dbReference type="FunFam" id="3.30.470.20:FF:000013">
    <property type="entry name" value="Carbamoyl-phosphate synthase large chain"/>
    <property type="match status" value="1"/>
</dbReference>
<dbReference type="FunFam" id="3.40.50.20:FF:000002">
    <property type="entry name" value="Carbamoyl-phosphate synthase large chain"/>
    <property type="match status" value="1"/>
</dbReference>
<dbReference type="Gene3D" id="3.40.50.20">
    <property type="match status" value="1"/>
</dbReference>
<dbReference type="Gene3D" id="3.30.1490.20">
    <property type="entry name" value="ATP-grasp fold, A domain"/>
    <property type="match status" value="1"/>
</dbReference>
<dbReference type="Gene3D" id="3.30.470.20">
    <property type="entry name" value="ATP-grasp fold, B domain"/>
    <property type="match status" value="1"/>
</dbReference>
<dbReference type="Gene3D" id="1.10.1030.10">
    <property type="entry name" value="Carbamoyl-phosphate synthetase, large subunit oligomerisation domain"/>
    <property type="match status" value="1"/>
</dbReference>
<dbReference type="Gene3D" id="3.40.50.1380">
    <property type="entry name" value="Methylglyoxal synthase-like domain"/>
    <property type="match status" value="1"/>
</dbReference>
<dbReference type="InterPro" id="IPR011761">
    <property type="entry name" value="ATP-grasp"/>
</dbReference>
<dbReference type="InterPro" id="IPR013815">
    <property type="entry name" value="ATP_grasp_subdomain_1"/>
</dbReference>
<dbReference type="InterPro" id="IPR005480">
    <property type="entry name" value="CarbamoylP_synth_lsu_oligo"/>
</dbReference>
<dbReference type="InterPro" id="IPR036897">
    <property type="entry name" value="CarbamoylP_synth_lsu_oligo_sf"/>
</dbReference>
<dbReference type="InterPro" id="IPR005479">
    <property type="entry name" value="CbamoylP_synth_lsu-like_ATP-bd"/>
</dbReference>
<dbReference type="InterPro" id="IPR005483">
    <property type="entry name" value="CbamoylP_synth_lsu_CPSase_dom"/>
</dbReference>
<dbReference type="InterPro" id="IPR011607">
    <property type="entry name" value="MGS-like_dom"/>
</dbReference>
<dbReference type="InterPro" id="IPR036914">
    <property type="entry name" value="MGS-like_dom_sf"/>
</dbReference>
<dbReference type="InterPro" id="IPR033937">
    <property type="entry name" value="MGS_CPS_CarB"/>
</dbReference>
<dbReference type="InterPro" id="IPR016185">
    <property type="entry name" value="PreATP-grasp_dom_sf"/>
</dbReference>
<dbReference type="NCBIfam" id="NF003671">
    <property type="entry name" value="PRK05294.1"/>
    <property type="match status" value="1"/>
</dbReference>
<dbReference type="PANTHER" id="PTHR11405:SF53">
    <property type="entry name" value="CARBAMOYL-PHOSPHATE SYNTHASE [AMMONIA], MITOCHONDRIAL"/>
    <property type="match status" value="1"/>
</dbReference>
<dbReference type="PANTHER" id="PTHR11405">
    <property type="entry name" value="CARBAMOYLTRANSFERASE FAMILY MEMBER"/>
    <property type="match status" value="1"/>
</dbReference>
<dbReference type="Pfam" id="PF02786">
    <property type="entry name" value="CPSase_L_D2"/>
    <property type="match status" value="1"/>
</dbReference>
<dbReference type="Pfam" id="PF02142">
    <property type="entry name" value="MGS"/>
    <property type="match status" value="1"/>
</dbReference>
<dbReference type="PRINTS" id="PR00098">
    <property type="entry name" value="CPSASE"/>
</dbReference>
<dbReference type="SMART" id="SM01096">
    <property type="entry name" value="CPSase_L_D3"/>
    <property type="match status" value="1"/>
</dbReference>
<dbReference type="SMART" id="SM00851">
    <property type="entry name" value="MGS"/>
    <property type="match status" value="1"/>
</dbReference>
<dbReference type="SUPFAM" id="SSF48108">
    <property type="entry name" value="Carbamoyl phosphate synthetase, large subunit connection domain"/>
    <property type="match status" value="1"/>
</dbReference>
<dbReference type="SUPFAM" id="SSF56059">
    <property type="entry name" value="Glutathione synthetase ATP-binding domain-like"/>
    <property type="match status" value="1"/>
</dbReference>
<dbReference type="SUPFAM" id="SSF52335">
    <property type="entry name" value="Methylglyoxal synthase-like"/>
    <property type="match status" value="1"/>
</dbReference>
<dbReference type="SUPFAM" id="SSF52440">
    <property type="entry name" value="PreATP-grasp domain"/>
    <property type="match status" value="1"/>
</dbReference>
<dbReference type="PROSITE" id="PS50975">
    <property type="entry name" value="ATP_GRASP"/>
    <property type="match status" value="1"/>
</dbReference>
<dbReference type="PROSITE" id="PS00866">
    <property type="entry name" value="CPSASE_1"/>
    <property type="match status" value="1"/>
</dbReference>
<dbReference type="PROSITE" id="PS00867">
    <property type="entry name" value="CPSASE_2"/>
    <property type="match status" value="1"/>
</dbReference>
<dbReference type="PROSITE" id="PS51855">
    <property type="entry name" value="MGS"/>
    <property type="match status" value="1"/>
</dbReference>
<reference key="1">
    <citation type="journal article" date="1996" name="Science">
        <title>Complete genome sequence of the methanogenic archaeon, Methanococcus jannaschii.</title>
        <authorList>
            <person name="Bult C.J."/>
            <person name="White O."/>
            <person name="Olsen G.J."/>
            <person name="Zhou L."/>
            <person name="Fleischmann R.D."/>
            <person name="Sutton G.G."/>
            <person name="Blake J.A."/>
            <person name="FitzGerald L.M."/>
            <person name="Clayton R.A."/>
            <person name="Gocayne J.D."/>
            <person name="Kerlavage A.R."/>
            <person name="Dougherty B.A."/>
            <person name="Tomb J.-F."/>
            <person name="Adams M.D."/>
            <person name="Reich C.I."/>
            <person name="Overbeek R."/>
            <person name="Kirkness E.F."/>
            <person name="Weinstock K.G."/>
            <person name="Merrick J.M."/>
            <person name="Glodek A."/>
            <person name="Scott J.L."/>
            <person name="Geoghagen N.S.M."/>
            <person name="Weidman J.F."/>
            <person name="Fuhrmann J.L."/>
            <person name="Nguyen D."/>
            <person name="Utterback T.R."/>
            <person name="Kelley J.M."/>
            <person name="Peterson J.D."/>
            <person name="Sadow P.W."/>
            <person name="Hanna M.C."/>
            <person name="Cotton M.D."/>
            <person name="Roberts K.M."/>
            <person name="Hurst M.A."/>
            <person name="Kaine B.P."/>
            <person name="Borodovsky M."/>
            <person name="Klenk H.-P."/>
            <person name="Fraser C.M."/>
            <person name="Smith H.O."/>
            <person name="Woese C.R."/>
            <person name="Venter J.C."/>
        </authorList>
    </citation>
    <scope>NUCLEOTIDE SEQUENCE [LARGE SCALE GENOMIC DNA]</scope>
    <source>
        <strain>ATCC 43067 / DSM 2661 / JAL-1 / JCM 10045 / NBRC 100440</strain>
    </source>
</reference>